<protein>
    <recommendedName>
        <fullName evidence="1">Nucleoside triphosphate pyrophosphatase</fullName>
        <ecNumber evidence="1">3.6.1.9</ecNumber>
    </recommendedName>
    <alternativeName>
        <fullName evidence="1">Nucleotide pyrophosphatase</fullName>
        <shortName evidence="1">Nucleotide PPase</shortName>
    </alternativeName>
</protein>
<dbReference type="EC" id="3.6.1.9" evidence="1"/>
<dbReference type="EMBL" id="BX548175">
    <property type="protein sequence ID" value="CAE21356.1"/>
    <property type="molecule type" value="Genomic_DNA"/>
</dbReference>
<dbReference type="SMR" id="Q7V6H8"/>
<dbReference type="KEGG" id="pmt:PMT_1181"/>
<dbReference type="eggNOG" id="COG0424">
    <property type="taxonomic scope" value="Bacteria"/>
</dbReference>
<dbReference type="HOGENOM" id="CLU_040416_1_2_3"/>
<dbReference type="OrthoDB" id="9807767at2"/>
<dbReference type="Proteomes" id="UP000001423">
    <property type="component" value="Chromosome"/>
</dbReference>
<dbReference type="GO" id="GO:0005737">
    <property type="term" value="C:cytoplasm"/>
    <property type="evidence" value="ECO:0007669"/>
    <property type="project" value="UniProtKB-SubCell"/>
</dbReference>
<dbReference type="GO" id="GO:0047429">
    <property type="term" value="F:nucleoside triphosphate diphosphatase activity"/>
    <property type="evidence" value="ECO:0007669"/>
    <property type="project" value="UniProtKB-EC"/>
</dbReference>
<dbReference type="GO" id="GO:0009117">
    <property type="term" value="P:nucleotide metabolic process"/>
    <property type="evidence" value="ECO:0007669"/>
    <property type="project" value="UniProtKB-KW"/>
</dbReference>
<dbReference type="CDD" id="cd00555">
    <property type="entry name" value="Maf"/>
    <property type="match status" value="1"/>
</dbReference>
<dbReference type="Gene3D" id="3.90.950.10">
    <property type="match status" value="1"/>
</dbReference>
<dbReference type="HAMAP" id="MF_00528">
    <property type="entry name" value="Maf"/>
    <property type="match status" value="1"/>
</dbReference>
<dbReference type="InterPro" id="IPR029001">
    <property type="entry name" value="ITPase-like_fam"/>
</dbReference>
<dbReference type="InterPro" id="IPR003697">
    <property type="entry name" value="Maf-like"/>
</dbReference>
<dbReference type="NCBIfam" id="TIGR00172">
    <property type="entry name" value="maf"/>
    <property type="match status" value="1"/>
</dbReference>
<dbReference type="PANTHER" id="PTHR43213">
    <property type="entry name" value="BIFUNCTIONAL DTTP/UTP PYROPHOSPHATASE/METHYLTRANSFERASE PROTEIN-RELATED"/>
    <property type="match status" value="1"/>
</dbReference>
<dbReference type="PANTHER" id="PTHR43213:SF5">
    <property type="entry name" value="BIFUNCTIONAL DTTP_UTP PYROPHOSPHATASE_METHYLTRANSFERASE PROTEIN-RELATED"/>
    <property type="match status" value="1"/>
</dbReference>
<dbReference type="Pfam" id="PF02545">
    <property type="entry name" value="Maf"/>
    <property type="match status" value="1"/>
</dbReference>
<dbReference type="PIRSF" id="PIRSF006305">
    <property type="entry name" value="Maf"/>
    <property type="match status" value="1"/>
</dbReference>
<dbReference type="SUPFAM" id="SSF52972">
    <property type="entry name" value="ITPase-like"/>
    <property type="match status" value="1"/>
</dbReference>
<gene>
    <name type="ordered locus">PMT_1181</name>
</gene>
<keyword id="KW-0963">Cytoplasm</keyword>
<keyword id="KW-0378">Hydrolase</keyword>
<keyword id="KW-0546">Nucleotide metabolism</keyword>
<keyword id="KW-1185">Reference proteome</keyword>
<feature type="chain" id="PRO_0000123042" description="Nucleoside triphosphate pyrophosphatase">
    <location>
        <begin position="1"/>
        <end position="184"/>
    </location>
</feature>
<feature type="active site" description="Proton acceptor" evidence="1">
    <location>
        <position position="66"/>
    </location>
</feature>
<name>NTPP_PROMM</name>
<organism>
    <name type="scientific">Prochlorococcus marinus (strain MIT 9313)</name>
    <dbReference type="NCBI Taxonomy" id="74547"/>
    <lineage>
        <taxon>Bacteria</taxon>
        <taxon>Bacillati</taxon>
        <taxon>Cyanobacteriota</taxon>
        <taxon>Cyanophyceae</taxon>
        <taxon>Synechococcales</taxon>
        <taxon>Prochlorococcaceae</taxon>
        <taxon>Prochlorococcus</taxon>
    </lineage>
</organism>
<accession>Q7V6H8</accession>
<reference key="1">
    <citation type="journal article" date="2003" name="Nature">
        <title>Genome divergence in two Prochlorococcus ecotypes reflects oceanic niche differentiation.</title>
        <authorList>
            <person name="Rocap G."/>
            <person name="Larimer F.W."/>
            <person name="Lamerdin J.E."/>
            <person name="Malfatti S."/>
            <person name="Chain P."/>
            <person name="Ahlgren N.A."/>
            <person name="Arellano A."/>
            <person name="Coleman M."/>
            <person name="Hauser L."/>
            <person name="Hess W.R."/>
            <person name="Johnson Z.I."/>
            <person name="Land M.L."/>
            <person name="Lindell D."/>
            <person name="Post A.F."/>
            <person name="Regala W."/>
            <person name="Shah M."/>
            <person name="Shaw S.L."/>
            <person name="Steglich C."/>
            <person name="Sullivan M.B."/>
            <person name="Ting C.S."/>
            <person name="Tolonen A."/>
            <person name="Webb E.A."/>
            <person name="Zinser E.R."/>
            <person name="Chisholm S.W."/>
        </authorList>
    </citation>
    <scope>NUCLEOTIDE SEQUENCE [LARGE SCALE GENOMIC DNA]</scope>
    <source>
        <strain>MIT 9313</strain>
    </source>
</reference>
<sequence length="184" mass="19809">MLASASPARRRLLQQAAIPHQVMVSGVDEETIHHFDPVRLVQHLAEAKAGVVHQQIKAALPVLGCDSVLEFDGTVFGKPATAVEASSRWQRMAGAWGFLHTGHCLLSVNGERLSETVTTRVLFAALSDSEIEAYVATGEPLLCAGGFALEGQGGLMVERLEGCFSNVIGLSLPLLRRWLLVINE</sequence>
<proteinExistence type="inferred from homology"/>
<evidence type="ECO:0000255" key="1">
    <source>
        <dbReference type="HAMAP-Rule" id="MF_00528"/>
    </source>
</evidence>
<comment type="function">
    <text evidence="1">Nucleoside triphosphate pyrophosphatase. May have a dual role in cell division arrest and in preventing the incorporation of modified nucleotides into cellular nucleic acids.</text>
</comment>
<comment type="catalytic activity">
    <reaction evidence="1">
        <text>a ribonucleoside 5'-triphosphate + H2O = a ribonucleoside 5'-phosphate + diphosphate + H(+)</text>
        <dbReference type="Rhea" id="RHEA:23996"/>
        <dbReference type="ChEBI" id="CHEBI:15377"/>
        <dbReference type="ChEBI" id="CHEBI:15378"/>
        <dbReference type="ChEBI" id="CHEBI:33019"/>
        <dbReference type="ChEBI" id="CHEBI:58043"/>
        <dbReference type="ChEBI" id="CHEBI:61557"/>
        <dbReference type="EC" id="3.6.1.9"/>
    </reaction>
</comment>
<comment type="catalytic activity">
    <reaction evidence="1">
        <text>a 2'-deoxyribonucleoside 5'-triphosphate + H2O = a 2'-deoxyribonucleoside 5'-phosphate + diphosphate + H(+)</text>
        <dbReference type="Rhea" id="RHEA:44644"/>
        <dbReference type="ChEBI" id="CHEBI:15377"/>
        <dbReference type="ChEBI" id="CHEBI:15378"/>
        <dbReference type="ChEBI" id="CHEBI:33019"/>
        <dbReference type="ChEBI" id="CHEBI:61560"/>
        <dbReference type="ChEBI" id="CHEBI:65317"/>
        <dbReference type="EC" id="3.6.1.9"/>
    </reaction>
</comment>
<comment type="cofactor">
    <cofactor evidence="1">
        <name>a divalent metal cation</name>
        <dbReference type="ChEBI" id="CHEBI:60240"/>
    </cofactor>
</comment>
<comment type="subcellular location">
    <subcellularLocation>
        <location evidence="1">Cytoplasm</location>
    </subcellularLocation>
</comment>
<comment type="similarity">
    <text evidence="1">Belongs to the Maf family.</text>
</comment>